<keyword id="KW-0903">Direct protein sequencing</keyword>
<keyword id="KW-0964">Secreted</keyword>
<sequence length="17" mass="1643">TDAVADGEHAISGVVDS</sequence>
<name>SEP1J_OSTSE</name>
<dbReference type="GO" id="GO:0005576">
    <property type="term" value="C:extracellular region"/>
    <property type="evidence" value="ECO:0007669"/>
    <property type="project" value="UniProtKB-SubCell"/>
</dbReference>
<proteinExistence type="evidence at protein level"/>
<comment type="function">
    <text evidence="2">May act as an antimicrobial peptide.</text>
</comment>
<comment type="subcellular location">
    <subcellularLocation>
        <location evidence="1">Secreted</location>
    </subcellularLocation>
</comment>
<comment type="tissue specificity">
    <text evidence="4">Expressed in skin glands.</text>
</comment>
<comment type="mass spectrometry" mass="1641.748" method="Electrospray" evidence="1"/>
<comment type="similarity">
    <text evidence="3">Belongs to the Frog skin active peptide (FSAP) family. Septenin subfamily.</text>
</comment>
<feature type="chain" id="PRO_0000453943" description="Septenin 1j">
    <location>
        <begin position="1"/>
        <end position="17"/>
    </location>
</feature>
<feature type="unsure residue" description="L or I" evidence="1">
    <location>
        <position position="11"/>
    </location>
</feature>
<reference key="1">
    <citation type="journal article" date="2021" name="Rapid Commun. Mass Spectrom.">
        <title>Manual mass spectrometry de novo sequencing of the anionic host defense peptides of the Cuban Treefrog Osteopilus septentrionalis.</title>
        <authorList>
            <person name="Samgina T.Y."/>
            <person name="Tolpina M.D."/>
            <person name="Surin A.K."/>
            <person name="Kovalev S.V."/>
            <person name="Bosch R.A."/>
            <person name="Alonso I.P."/>
            <person name="Garcia F.A."/>
            <person name="Gonzalez Lopez L.J."/>
            <person name="Lebedev A.T."/>
        </authorList>
    </citation>
    <scope>PROTEIN SEQUENCE</scope>
    <scope>MASS SPECTROMETRY</scope>
</reference>
<protein>
    <recommendedName>
        <fullName evidence="2">Septenin 1j</fullName>
    </recommendedName>
</protein>
<organism>
    <name type="scientific">Osteopilus septentrionalis</name>
    <name type="common">Cuban treefrog</name>
    <dbReference type="NCBI Taxonomy" id="317373"/>
    <lineage>
        <taxon>Eukaryota</taxon>
        <taxon>Metazoa</taxon>
        <taxon>Chordata</taxon>
        <taxon>Craniata</taxon>
        <taxon>Vertebrata</taxon>
        <taxon>Euteleostomi</taxon>
        <taxon>Amphibia</taxon>
        <taxon>Batrachia</taxon>
        <taxon>Anura</taxon>
        <taxon>Neobatrachia</taxon>
        <taxon>Hyloidea</taxon>
        <taxon>Hylidae</taxon>
        <taxon>Hylinae</taxon>
        <taxon>Lophiohylini</taxon>
        <taxon>Osteopilus</taxon>
    </lineage>
</organism>
<accession>C0HLX0</accession>
<evidence type="ECO:0000269" key="1">
    <source>
    </source>
</evidence>
<evidence type="ECO:0000303" key="2">
    <source>
    </source>
</evidence>
<evidence type="ECO:0000305" key="3"/>
<evidence type="ECO:0000305" key="4">
    <source>
    </source>
</evidence>